<keyword id="KW-0456">Lyase</keyword>
<keyword id="KW-1185">Reference proteome</keyword>
<proteinExistence type="inferred from homology"/>
<accession>Q12GT8</accession>
<protein>
    <recommendedName>
        <fullName evidence="1">Cyanate hydratase</fullName>
        <shortName evidence="1">Cyanase</shortName>
        <ecNumber evidence="1">4.2.1.104</ecNumber>
    </recommendedName>
    <alternativeName>
        <fullName evidence="1">Cyanate hydrolase</fullName>
    </alternativeName>
    <alternativeName>
        <fullName evidence="1">Cyanate lyase</fullName>
    </alternativeName>
</protein>
<feature type="chain" id="PRO_1000072536" description="Cyanate hydratase">
    <location>
        <begin position="1"/>
        <end position="147"/>
    </location>
</feature>
<feature type="active site" evidence="1">
    <location>
        <position position="88"/>
    </location>
</feature>
<feature type="active site" evidence="1">
    <location>
        <position position="91"/>
    </location>
</feature>
<feature type="active site" evidence="1">
    <location>
        <position position="114"/>
    </location>
</feature>
<gene>
    <name evidence="1" type="primary">cynS</name>
    <name type="ordered locus">Bpro_0289</name>
</gene>
<comment type="function">
    <text evidence="1">Catalyzes the reaction of cyanate with bicarbonate to produce ammonia and carbon dioxide.</text>
</comment>
<comment type="catalytic activity">
    <reaction evidence="1">
        <text>cyanate + hydrogencarbonate + 3 H(+) = NH4(+) + 2 CO2</text>
        <dbReference type="Rhea" id="RHEA:11120"/>
        <dbReference type="ChEBI" id="CHEBI:15378"/>
        <dbReference type="ChEBI" id="CHEBI:16526"/>
        <dbReference type="ChEBI" id="CHEBI:17544"/>
        <dbReference type="ChEBI" id="CHEBI:28938"/>
        <dbReference type="ChEBI" id="CHEBI:29195"/>
        <dbReference type="EC" id="4.2.1.104"/>
    </reaction>
</comment>
<comment type="similarity">
    <text evidence="1">Belongs to the cyanase family.</text>
</comment>
<dbReference type="EC" id="4.2.1.104" evidence="1"/>
<dbReference type="EMBL" id="CP000316">
    <property type="protein sequence ID" value="ABE42254.1"/>
    <property type="molecule type" value="Genomic_DNA"/>
</dbReference>
<dbReference type="RefSeq" id="WP_011481261.1">
    <property type="nucleotide sequence ID" value="NC_007948.1"/>
</dbReference>
<dbReference type="SMR" id="Q12GT8"/>
<dbReference type="STRING" id="296591.Bpro_0289"/>
<dbReference type="KEGG" id="pol:Bpro_0289"/>
<dbReference type="eggNOG" id="COG1513">
    <property type="taxonomic scope" value="Bacteria"/>
</dbReference>
<dbReference type="HOGENOM" id="CLU_103452_1_0_4"/>
<dbReference type="OrthoDB" id="9785870at2"/>
<dbReference type="Proteomes" id="UP000001983">
    <property type="component" value="Chromosome"/>
</dbReference>
<dbReference type="GO" id="GO:0008824">
    <property type="term" value="F:cyanate hydratase activity"/>
    <property type="evidence" value="ECO:0007669"/>
    <property type="project" value="UniProtKB-UniRule"/>
</dbReference>
<dbReference type="GO" id="GO:0003677">
    <property type="term" value="F:DNA binding"/>
    <property type="evidence" value="ECO:0007669"/>
    <property type="project" value="InterPro"/>
</dbReference>
<dbReference type="GO" id="GO:0009439">
    <property type="term" value="P:cyanate metabolic process"/>
    <property type="evidence" value="ECO:0007669"/>
    <property type="project" value="UniProtKB-UniRule"/>
</dbReference>
<dbReference type="CDD" id="cd00559">
    <property type="entry name" value="Cyanase_C"/>
    <property type="match status" value="1"/>
</dbReference>
<dbReference type="Gene3D" id="3.30.1160.10">
    <property type="entry name" value="Cyanate lyase, C-terminal domain"/>
    <property type="match status" value="1"/>
</dbReference>
<dbReference type="Gene3D" id="1.10.260.40">
    <property type="entry name" value="lambda repressor-like DNA-binding domains"/>
    <property type="match status" value="1"/>
</dbReference>
<dbReference type="HAMAP" id="MF_00535">
    <property type="entry name" value="Cyanate_hydrat"/>
    <property type="match status" value="1"/>
</dbReference>
<dbReference type="InterPro" id="IPR008076">
    <property type="entry name" value="Cyanase"/>
</dbReference>
<dbReference type="InterPro" id="IPR003712">
    <property type="entry name" value="Cyanate_lyase_C"/>
</dbReference>
<dbReference type="InterPro" id="IPR036581">
    <property type="entry name" value="Cyanate_lyase_C_sf"/>
</dbReference>
<dbReference type="InterPro" id="IPR048564">
    <property type="entry name" value="CYNS_N"/>
</dbReference>
<dbReference type="InterPro" id="IPR010982">
    <property type="entry name" value="Lambda_DNA-bd_dom_sf"/>
</dbReference>
<dbReference type="NCBIfam" id="TIGR00673">
    <property type="entry name" value="cynS"/>
    <property type="match status" value="1"/>
</dbReference>
<dbReference type="NCBIfam" id="NF002773">
    <property type="entry name" value="PRK02866.1"/>
    <property type="match status" value="1"/>
</dbReference>
<dbReference type="PANTHER" id="PTHR34186">
    <property type="entry name" value="CYANATE HYDRATASE"/>
    <property type="match status" value="1"/>
</dbReference>
<dbReference type="PANTHER" id="PTHR34186:SF2">
    <property type="entry name" value="CYANATE HYDRATASE"/>
    <property type="match status" value="1"/>
</dbReference>
<dbReference type="Pfam" id="PF02560">
    <property type="entry name" value="Cyanate_lyase"/>
    <property type="match status" value="1"/>
</dbReference>
<dbReference type="Pfam" id="PF21291">
    <property type="entry name" value="CYNS_N"/>
    <property type="match status" value="1"/>
</dbReference>
<dbReference type="PIRSF" id="PIRSF001263">
    <property type="entry name" value="Cyanate_hydratas"/>
    <property type="match status" value="1"/>
</dbReference>
<dbReference type="PRINTS" id="PR01693">
    <property type="entry name" value="CYANASE"/>
</dbReference>
<dbReference type="SMART" id="SM01116">
    <property type="entry name" value="Cyanate_lyase"/>
    <property type="match status" value="1"/>
</dbReference>
<dbReference type="SUPFAM" id="SSF55234">
    <property type="entry name" value="Cyanase C-terminal domain"/>
    <property type="match status" value="1"/>
</dbReference>
<dbReference type="SUPFAM" id="SSF47413">
    <property type="entry name" value="lambda repressor-like DNA-binding domains"/>
    <property type="match status" value="1"/>
</dbReference>
<reference key="1">
    <citation type="journal article" date="2008" name="Appl. Environ. Microbiol.">
        <title>The genome of Polaromonas sp. strain JS666: insights into the evolution of a hydrocarbon- and xenobiotic-degrading bacterium, and features of relevance to biotechnology.</title>
        <authorList>
            <person name="Mattes T.E."/>
            <person name="Alexander A.K."/>
            <person name="Richardson P.M."/>
            <person name="Munk A.C."/>
            <person name="Han C.S."/>
            <person name="Stothard P."/>
            <person name="Coleman N.V."/>
        </authorList>
    </citation>
    <scope>NUCLEOTIDE SEQUENCE [LARGE SCALE GENOMIC DNA]</scope>
    <source>
        <strain>JS666 / ATCC BAA-500</strain>
    </source>
</reference>
<sequence length="147" mass="16559">MNRNDITEKIITTKVAKGITWESVAKKVGLSKEWVTAGCLGQMTFDEKQAKVVGKIFGLTAEEQKWLQVVPYKGSLPTPVPTDPLIYRWYEIVSVYGTTIKELIHEEFGDGIMSAIDFSMDIVRQPDPKGDRVNVVLSGKFLPYKTY</sequence>
<evidence type="ECO:0000255" key="1">
    <source>
        <dbReference type="HAMAP-Rule" id="MF_00535"/>
    </source>
</evidence>
<organism>
    <name type="scientific">Polaromonas sp. (strain JS666 / ATCC BAA-500)</name>
    <dbReference type="NCBI Taxonomy" id="296591"/>
    <lineage>
        <taxon>Bacteria</taxon>
        <taxon>Pseudomonadati</taxon>
        <taxon>Pseudomonadota</taxon>
        <taxon>Betaproteobacteria</taxon>
        <taxon>Burkholderiales</taxon>
        <taxon>Comamonadaceae</taxon>
        <taxon>Polaromonas</taxon>
    </lineage>
</organism>
<name>CYNS_POLSJ</name>